<feature type="chain" id="PRO_0000326488" description="Phosducin-like protein 2">
    <location>
        <begin position="1"/>
        <end position="239"/>
    </location>
</feature>
<feature type="domain" description="Phosducin" evidence="1">
    <location>
        <begin position="36"/>
        <end position="196"/>
    </location>
</feature>
<feature type="region of interest" description="Disordered" evidence="2">
    <location>
        <begin position="42"/>
        <end position="64"/>
    </location>
</feature>
<feature type="region of interest" description="Thioredoxin fold">
    <location>
        <begin position="90"/>
        <end position="239"/>
    </location>
</feature>
<feature type="region of interest" description="Disordered" evidence="2">
    <location>
        <begin position="212"/>
        <end position="239"/>
    </location>
</feature>
<feature type="coiled-coil region" evidence="1">
    <location>
        <begin position="26"/>
        <end position="87"/>
    </location>
</feature>
<feature type="compositionally biased region" description="Basic and acidic residues" evidence="2">
    <location>
        <begin position="42"/>
        <end position="59"/>
    </location>
</feature>
<feature type="compositionally biased region" description="Basic residues" evidence="2">
    <location>
        <begin position="214"/>
        <end position="224"/>
    </location>
</feature>
<feature type="compositionally biased region" description="Acidic residues" evidence="2">
    <location>
        <begin position="230"/>
        <end position="239"/>
    </location>
</feature>
<feature type="sequence conflict" description="In Ref. 1; AAQ11193." evidence="3" ref="1">
    <original>T</original>
    <variation>P</variation>
    <location>
        <position position="163"/>
    </location>
</feature>
<proteinExistence type="evidence at transcript level"/>
<reference key="1">
    <citation type="journal article" date="2003" name="EMBO J.">
        <title>Phosducin-like proteins in Dictyostelium discoideum: implications for the phosducin family of proteins.</title>
        <authorList>
            <person name="Blaauw M."/>
            <person name="Knol J.C."/>
            <person name="Kortholt A."/>
            <person name="Roelofs J."/>
            <person name="Ruchira X."/>
            <person name="Postma M."/>
            <person name="Visser A.J.W.G."/>
            <person name="van Haastert P.J.M."/>
        </authorList>
    </citation>
    <scope>NUCLEOTIDE SEQUENCE [MRNA]</scope>
    <scope>THIOREDOXIN FOLD REGION</scope>
</reference>
<reference key="2">
    <citation type="journal article" date="2005" name="Nature">
        <title>The genome of the social amoeba Dictyostelium discoideum.</title>
        <authorList>
            <person name="Eichinger L."/>
            <person name="Pachebat J.A."/>
            <person name="Gloeckner G."/>
            <person name="Rajandream M.A."/>
            <person name="Sucgang R."/>
            <person name="Berriman M."/>
            <person name="Song J."/>
            <person name="Olsen R."/>
            <person name="Szafranski K."/>
            <person name="Xu Q."/>
            <person name="Tunggal B."/>
            <person name="Kummerfeld S."/>
            <person name="Madera M."/>
            <person name="Konfortov B.A."/>
            <person name="Rivero F."/>
            <person name="Bankier A.T."/>
            <person name="Lehmann R."/>
            <person name="Hamlin N."/>
            <person name="Davies R."/>
            <person name="Gaudet P."/>
            <person name="Fey P."/>
            <person name="Pilcher K."/>
            <person name="Chen G."/>
            <person name="Saunders D."/>
            <person name="Sodergren E.J."/>
            <person name="Davis P."/>
            <person name="Kerhornou A."/>
            <person name="Nie X."/>
            <person name="Hall N."/>
            <person name="Anjard C."/>
            <person name="Hemphill L."/>
            <person name="Bason N."/>
            <person name="Farbrother P."/>
            <person name="Desany B."/>
            <person name="Just E."/>
            <person name="Morio T."/>
            <person name="Rost R."/>
            <person name="Churcher C.M."/>
            <person name="Cooper J."/>
            <person name="Haydock S."/>
            <person name="van Driessche N."/>
            <person name="Cronin A."/>
            <person name="Goodhead I."/>
            <person name="Muzny D.M."/>
            <person name="Mourier T."/>
            <person name="Pain A."/>
            <person name="Lu M."/>
            <person name="Harper D."/>
            <person name="Lindsay R."/>
            <person name="Hauser H."/>
            <person name="James K.D."/>
            <person name="Quiles M."/>
            <person name="Madan Babu M."/>
            <person name="Saito T."/>
            <person name="Buchrieser C."/>
            <person name="Wardroper A."/>
            <person name="Felder M."/>
            <person name="Thangavelu M."/>
            <person name="Johnson D."/>
            <person name="Knights A."/>
            <person name="Loulseged H."/>
            <person name="Mungall K.L."/>
            <person name="Oliver K."/>
            <person name="Price C."/>
            <person name="Quail M.A."/>
            <person name="Urushihara H."/>
            <person name="Hernandez J."/>
            <person name="Rabbinowitsch E."/>
            <person name="Steffen D."/>
            <person name="Sanders M."/>
            <person name="Ma J."/>
            <person name="Kohara Y."/>
            <person name="Sharp S."/>
            <person name="Simmonds M.N."/>
            <person name="Spiegler S."/>
            <person name="Tivey A."/>
            <person name="Sugano S."/>
            <person name="White B."/>
            <person name="Walker D."/>
            <person name="Woodward J.R."/>
            <person name="Winckler T."/>
            <person name="Tanaka Y."/>
            <person name="Shaulsky G."/>
            <person name="Schleicher M."/>
            <person name="Weinstock G.M."/>
            <person name="Rosenthal A."/>
            <person name="Cox E.C."/>
            <person name="Chisholm R.L."/>
            <person name="Gibbs R.A."/>
            <person name="Loomis W.F."/>
            <person name="Platzer M."/>
            <person name="Kay R.R."/>
            <person name="Williams J.G."/>
            <person name="Dear P.H."/>
            <person name="Noegel A.A."/>
            <person name="Barrell B.G."/>
            <person name="Kuspa A."/>
        </authorList>
    </citation>
    <scope>NUCLEOTIDE SEQUENCE [LARGE SCALE GENOMIC DNA]</scope>
    <source>
        <strain>AX4</strain>
    </source>
</reference>
<dbReference type="EMBL" id="AF540059">
    <property type="protein sequence ID" value="AAQ11193.1"/>
    <property type="molecule type" value="mRNA"/>
</dbReference>
<dbReference type="EMBL" id="AAFI02000079">
    <property type="protein sequence ID" value="EAL64554.1"/>
    <property type="molecule type" value="Genomic_DNA"/>
</dbReference>
<dbReference type="RefSeq" id="XP_638066.1">
    <property type="nucleotide sequence ID" value="XM_632974.1"/>
</dbReference>
<dbReference type="SMR" id="Q71A38"/>
<dbReference type="FunCoup" id="Q71A38">
    <property type="interactions" value="266"/>
</dbReference>
<dbReference type="STRING" id="44689.Q71A38"/>
<dbReference type="PaxDb" id="44689-DDB0191251"/>
<dbReference type="EnsemblProtists" id="EAL64554">
    <property type="protein sequence ID" value="EAL64554"/>
    <property type="gene ID" value="DDB_G0285433"/>
</dbReference>
<dbReference type="GeneID" id="8625112"/>
<dbReference type="KEGG" id="ddi:DDB_G0285433"/>
<dbReference type="dictyBase" id="DDB_G0285433">
    <property type="gene designation" value="phlp2"/>
</dbReference>
<dbReference type="VEuPathDB" id="AmoebaDB:DDB_G0285433"/>
<dbReference type="eggNOG" id="KOG3170">
    <property type="taxonomic scope" value="Eukaryota"/>
</dbReference>
<dbReference type="HOGENOM" id="CLU_072604_0_0_1"/>
<dbReference type="InParanoid" id="Q71A38"/>
<dbReference type="OMA" id="FCEIRAN"/>
<dbReference type="PhylomeDB" id="Q71A38"/>
<dbReference type="PRO" id="PR:Q71A38"/>
<dbReference type="Proteomes" id="UP000002195">
    <property type="component" value="Chromosome 4"/>
</dbReference>
<dbReference type="GO" id="GO:0005737">
    <property type="term" value="C:cytoplasm"/>
    <property type="evidence" value="ECO:0000318"/>
    <property type="project" value="GO_Central"/>
</dbReference>
<dbReference type="GO" id="GO:0019954">
    <property type="term" value="P:asexual reproduction"/>
    <property type="evidence" value="ECO:0000315"/>
    <property type="project" value="dictyBase"/>
</dbReference>
<dbReference type="GO" id="GO:0006457">
    <property type="term" value="P:protein folding"/>
    <property type="evidence" value="ECO:0000318"/>
    <property type="project" value="GO_Central"/>
</dbReference>
<dbReference type="CDD" id="cd02988">
    <property type="entry name" value="Phd_like_VIAF"/>
    <property type="match status" value="1"/>
</dbReference>
<dbReference type="FunFam" id="3.40.30.10:FF:000365">
    <property type="entry name" value="Phosducin-like protein 2"/>
    <property type="match status" value="1"/>
</dbReference>
<dbReference type="Gene3D" id="3.40.30.10">
    <property type="entry name" value="Glutaredoxin"/>
    <property type="match status" value="1"/>
</dbReference>
<dbReference type="InterPro" id="IPR051498">
    <property type="entry name" value="Phosducin-like_chap/apop_reg"/>
</dbReference>
<dbReference type="InterPro" id="IPR024253">
    <property type="entry name" value="Phosducin_thioredoxin-like_dom"/>
</dbReference>
<dbReference type="InterPro" id="IPR036249">
    <property type="entry name" value="Thioredoxin-like_sf"/>
</dbReference>
<dbReference type="PANTHER" id="PTHR45809">
    <property type="entry name" value="VIRAL IAP-ASSOCIATED FACTOR HOMOLOG"/>
    <property type="match status" value="1"/>
</dbReference>
<dbReference type="PANTHER" id="PTHR45809:SF3">
    <property type="entry name" value="VIRAL IAP-ASSOCIATED FACTOR HOMOLOG"/>
    <property type="match status" value="1"/>
</dbReference>
<dbReference type="Pfam" id="PF02114">
    <property type="entry name" value="Phosducin"/>
    <property type="match status" value="1"/>
</dbReference>
<dbReference type="SUPFAM" id="SSF52833">
    <property type="entry name" value="Thioredoxin-like"/>
    <property type="match status" value="1"/>
</dbReference>
<evidence type="ECO:0000255" key="1"/>
<evidence type="ECO:0000256" key="2">
    <source>
        <dbReference type="SAM" id="MobiDB-lite"/>
    </source>
</evidence>
<evidence type="ECO:0000305" key="3"/>
<keyword id="KW-0175">Coiled coil</keyword>
<keyword id="KW-1185">Reference proteome</keyword>
<organism>
    <name type="scientific">Dictyostelium discoideum</name>
    <name type="common">Social amoeba</name>
    <dbReference type="NCBI Taxonomy" id="44689"/>
    <lineage>
        <taxon>Eukaryota</taxon>
        <taxon>Amoebozoa</taxon>
        <taxon>Evosea</taxon>
        <taxon>Eumycetozoa</taxon>
        <taxon>Dictyostelia</taxon>
        <taxon>Dictyosteliales</taxon>
        <taxon>Dictyosteliaceae</taxon>
        <taxon>Dictyostelium</taxon>
    </lineage>
</organism>
<protein>
    <recommendedName>
        <fullName>Phosducin-like protein 2</fullName>
    </recommendedName>
</protein>
<name>PHLP2_DICDI</name>
<sequence>MGLGKTEWEDIQIKYGNMEAPPKQLTEDELFDLIKEAAEMATEAEKNEKLENASLKDLKDMEDDEDEDVLEQLRKKRIQQMKVEAELNKFGELKEISEPSYKSEVTECKGVMVVVHLFKNGIPQCQLVNQHLTILAKKFKATKFVKIRSEEAIHNYPDKNLPTILVYFNGDIVGQIITLRATGGDATTVNDIEWQLKQAHAIKSDLQEDPRITLARKKSQKSRYSKADSDESDNSDSDD</sequence>
<accession>Q71A38</accession>
<accession>Q54N77</accession>
<gene>
    <name type="primary">phlp2</name>
    <name type="ORF">DDB_G0285433</name>
</gene>
<comment type="similarity">
    <text evidence="3">Belongs to the phosducin family.</text>
</comment>